<comment type="similarity">
    <text evidence="1">Belongs to the UPF0434 family.</text>
</comment>
<protein>
    <recommendedName>
        <fullName evidence="1">UPF0434 protein PM0859</fullName>
    </recommendedName>
</protein>
<keyword id="KW-1185">Reference proteome</keyword>
<name>Y859_PASMU</name>
<evidence type="ECO:0000255" key="1">
    <source>
        <dbReference type="HAMAP-Rule" id="MF_01187"/>
    </source>
</evidence>
<dbReference type="EMBL" id="AE004439">
    <property type="protein sequence ID" value="AAK02943.1"/>
    <property type="molecule type" value="Genomic_DNA"/>
</dbReference>
<dbReference type="RefSeq" id="WP_005716837.1">
    <property type="nucleotide sequence ID" value="NC_002663.1"/>
</dbReference>
<dbReference type="SMR" id="Q9CMG9"/>
<dbReference type="STRING" id="272843.PM0859"/>
<dbReference type="EnsemblBacteria" id="AAK02943">
    <property type="protein sequence ID" value="AAK02943"/>
    <property type="gene ID" value="PM0859"/>
</dbReference>
<dbReference type="KEGG" id="pmu:PM0859"/>
<dbReference type="HOGENOM" id="CLU_155659_3_0_6"/>
<dbReference type="OrthoDB" id="9812205at2"/>
<dbReference type="Proteomes" id="UP000000809">
    <property type="component" value="Chromosome"/>
</dbReference>
<dbReference type="GO" id="GO:0005829">
    <property type="term" value="C:cytosol"/>
    <property type="evidence" value="ECO:0007669"/>
    <property type="project" value="TreeGrafter"/>
</dbReference>
<dbReference type="Gene3D" id="2.20.25.10">
    <property type="match status" value="1"/>
</dbReference>
<dbReference type="HAMAP" id="MF_01187">
    <property type="entry name" value="UPF0434"/>
    <property type="match status" value="1"/>
</dbReference>
<dbReference type="InterPro" id="IPR005651">
    <property type="entry name" value="Trm112-like"/>
</dbReference>
<dbReference type="PANTHER" id="PTHR33505:SF4">
    <property type="entry name" value="PROTEIN PREY, MITOCHONDRIAL"/>
    <property type="match status" value="1"/>
</dbReference>
<dbReference type="PANTHER" id="PTHR33505">
    <property type="entry name" value="ZGC:162634"/>
    <property type="match status" value="1"/>
</dbReference>
<dbReference type="Pfam" id="PF03966">
    <property type="entry name" value="Trm112p"/>
    <property type="match status" value="1"/>
</dbReference>
<dbReference type="SUPFAM" id="SSF158997">
    <property type="entry name" value="Trm112p-like"/>
    <property type="match status" value="1"/>
</dbReference>
<reference key="1">
    <citation type="journal article" date="2001" name="Proc. Natl. Acad. Sci. U.S.A.">
        <title>Complete genomic sequence of Pasteurella multocida Pm70.</title>
        <authorList>
            <person name="May B.J."/>
            <person name="Zhang Q."/>
            <person name="Li L.L."/>
            <person name="Paustian M.L."/>
            <person name="Whittam T.S."/>
            <person name="Kapur V."/>
        </authorList>
    </citation>
    <scope>NUCLEOTIDE SEQUENCE [LARGE SCALE GENOMIC DNA]</scope>
    <source>
        <strain>Pm70</strain>
    </source>
</reference>
<organism>
    <name type="scientific">Pasteurella multocida (strain Pm70)</name>
    <dbReference type="NCBI Taxonomy" id="272843"/>
    <lineage>
        <taxon>Bacteria</taxon>
        <taxon>Pseudomonadati</taxon>
        <taxon>Pseudomonadota</taxon>
        <taxon>Gammaproteobacteria</taxon>
        <taxon>Pasteurellales</taxon>
        <taxon>Pasteurellaceae</taxon>
        <taxon>Pasteurella</taxon>
    </lineage>
</organism>
<feature type="chain" id="PRO_0000291124" description="UPF0434 protein PM0859">
    <location>
        <begin position="1"/>
        <end position="60"/>
    </location>
</feature>
<sequence length="60" mass="6622">MDSTLLEIVACPICHGRLALDQTSQKLVCHFDKVAYDINQGIPVLLAEQAMPLSARQEEP</sequence>
<gene>
    <name type="ordered locus">PM0859</name>
</gene>
<proteinExistence type="inferred from homology"/>
<accession>Q9CMG9</accession>